<organism>
    <name type="scientific">Vaccinia virus (strain Tian Tan)</name>
    <name type="common">VACV</name>
    <dbReference type="NCBI Taxonomy" id="10253"/>
    <lineage>
        <taxon>Viruses</taxon>
        <taxon>Varidnaviria</taxon>
        <taxon>Bamfordvirae</taxon>
        <taxon>Nucleocytoviricota</taxon>
        <taxon>Pokkesviricetes</taxon>
        <taxon>Chitovirales</taxon>
        <taxon>Poxviridae</taxon>
        <taxon>Chordopoxvirinae</taxon>
        <taxon>Orthopoxvirus</taxon>
        <taxon>Vaccinia virus</taxon>
    </lineage>
</organism>
<accession>Q9JFE5</accession>
<proteinExistence type="inferred from homology"/>
<protein>
    <recommendedName>
        <fullName>Serine/threonine-protein kinase 2</fullName>
        <ecNumber>2.7.11.1</ecNumber>
    </recommendedName>
    <alternativeName>
        <fullName>Vaccinia protein kinase 2</fullName>
    </alternativeName>
</protein>
<keyword id="KW-0067">ATP-binding</keyword>
<keyword id="KW-1038">Host endoplasmic reticulum</keyword>
<keyword id="KW-0418">Kinase</keyword>
<keyword id="KW-0426">Late protein</keyword>
<keyword id="KW-0547">Nucleotide-binding</keyword>
<keyword id="KW-0597">Phosphoprotein</keyword>
<keyword id="KW-0723">Serine/threonine-protein kinase</keyword>
<keyword id="KW-0808">Transferase</keyword>
<dbReference type="EC" id="2.7.11.1"/>
<dbReference type="EMBL" id="AF095689">
    <property type="protein sequence ID" value="AAF33901.1"/>
    <property type="molecule type" value="Genomic_DNA"/>
</dbReference>
<dbReference type="Proteomes" id="UP000163220">
    <property type="component" value="Genome"/>
</dbReference>
<dbReference type="GO" id="GO:0044165">
    <property type="term" value="C:host cell endoplasmic reticulum"/>
    <property type="evidence" value="ECO:0007669"/>
    <property type="project" value="UniProtKB-SubCell"/>
</dbReference>
<dbReference type="GO" id="GO:0044172">
    <property type="term" value="C:host cell endoplasmic reticulum-Golgi intermediate compartment"/>
    <property type="evidence" value="ECO:0007669"/>
    <property type="project" value="UniProtKB-SubCell"/>
</dbReference>
<dbReference type="GO" id="GO:0005524">
    <property type="term" value="F:ATP binding"/>
    <property type="evidence" value="ECO:0007669"/>
    <property type="project" value="UniProtKB-KW"/>
</dbReference>
<dbReference type="GO" id="GO:0106310">
    <property type="term" value="F:protein serine kinase activity"/>
    <property type="evidence" value="ECO:0007669"/>
    <property type="project" value="RHEA"/>
</dbReference>
<dbReference type="GO" id="GO:0004674">
    <property type="term" value="F:protein serine/threonine kinase activity"/>
    <property type="evidence" value="ECO:0007669"/>
    <property type="project" value="UniProtKB-KW"/>
</dbReference>
<dbReference type="InterPro" id="IPR008790">
    <property type="entry name" value="Poxvirus_ser/thr_kinase"/>
</dbReference>
<dbReference type="InterPro" id="IPR000719">
    <property type="entry name" value="Prot_kinase_dom"/>
</dbReference>
<dbReference type="InterPro" id="IPR008271">
    <property type="entry name" value="Ser/Thr_kinase_AS"/>
</dbReference>
<dbReference type="Pfam" id="PF05445">
    <property type="entry name" value="Pox_ser-thr_kin"/>
    <property type="match status" value="1"/>
</dbReference>
<dbReference type="PIRSF" id="PIRSF015695">
    <property type="entry name" value="STPK_F10L"/>
    <property type="match status" value="1"/>
</dbReference>
<dbReference type="PROSITE" id="PS50011">
    <property type="entry name" value="PROTEIN_KINASE_DOM"/>
    <property type="match status" value="1"/>
</dbReference>
<dbReference type="PROSITE" id="PS00108">
    <property type="entry name" value="PROTEIN_KINASE_ST"/>
    <property type="match status" value="1"/>
</dbReference>
<gene>
    <name type="primary">OPG054</name>
    <name type="synonym">VPK2</name>
    <name type="ORF">TF10L</name>
</gene>
<organismHost>
    <name type="scientific">Homo sapiens</name>
    <name type="common">Human</name>
    <dbReference type="NCBI Taxonomy" id="9606"/>
</organismHost>
<sequence length="439" mass="52140">MGVANDSSPEYQWMSPHRLSDTVILGDCLYFNNIMSQLDLHQNWAPPVRLLNYFKNFNKETLLKIEENDYINSSFFQQKDKRFYPINDDFYHISTGGYGIVFKIDNYVVKFVFEATKLYSPMETTAEFTVPKFLYNNLKGDEKKLIVCAWAMGLNYKLTFLHTLYKRVLHMLLLLIQTMDGQELSLRYSSKVFLKAFNERKDSIKFVKLLSHFYPAVINSNINVINYFNRMFHFFEHEKRTNYEYERGNIIIFPLALYSADKVDTELAIKLGFKSLVQYIKFIFLQMALLYIKIYELPCCDNFLHADLKPDNILLFDSNEPIIIHLKDKKFVFNERIKSALNDFDFSQVAGIINKKIKNNFKVKHNWYYDFHFFVHTLLKTYPEIEKDIEFSTALEEFIMCTKTDCDKYRLKVSILHPISFLEKFIMRDIFSDWINGGN</sequence>
<evidence type="ECO:0000250" key="1">
    <source>
        <dbReference type="UniProtKB" id="Q89121"/>
    </source>
</evidence>
<evidence type="ECO:0000255" key="2">
    <source>
        <dbReference type="PROSITE-ProRule" id="PRU00159"/>
    </source>
</evidence>
<evidence type="ECO:0000255" key="3">
    <source>
        <dbReference type="PROSITE-ProRule" id="PRU10027"/>
    </source>
</evidence>
<comment type="function">
    <text evidence="1">Essential serine-protein kinase involved in the early stage of virion morphogenesis.</text>
</comment>
<comment type="catalytic activity">
    <reaction>
        <text>L-seryl-[protein] + ATP = O-phospho-L-seryl-[protein] + ADP + H(+)</text>
        <dbReference type="Rhea" id="RHEA:17989"/>
        <dbReference type="Rhea" id="RHEA-COMP:9863"/>
        <dbReference type="Rhea" id="RHEA-COMP:11604"/>
        <dbReference type="ChEBI" id="CHEBI:15378"/>
        <dbReference type="ChEBI" id="CHEBI:29999"/>
        <dbReference type="ChEBI" id="CHEBI:30616"/>
        <dbReference type="ChEBI" id="CHEBI:83421"/>
        <dbReference type="ChEBI" id="CHEBI:456216"/>
        <dbReference type="EC" id="2.7.11.1"/>
    </reaction>
</comment>
<comment type="catalytic activity">
    <reaction>
        <text>L-threonyl-[protein] + ATP = O-phospho-L-threonyl-[protein] + ADP + H(+)</text>
        <dbReference type="Rhea" id="RHEA:46608"/>
        <dbReference type="Rhea" id="RHEA-COMP:11060"/>
        <dbReference type="Rhea" id="RHEA-COMP:11605"/>
        <dbReference type="ChEBI" id="CHEBI:15378"/>
        <dbReference type="ChEBI" id="CHEBI:30013"/>
        <dbReference type="ChEBI" id="CHEBI:30616"/>
        <dbReference type="ChEBI" id="CHEBI:61977"/>
        <dbReference type="ChEBI" id="CHEBI:456216"/>
        <dbReference type="EC" id="2.7.11.1"/>
    </reaction>
</comment>
<comment type="subcellular location">
    <subcellularLocation>
        <location evidence="1">Host endoplasmic reticulum</location>
    </subcellularLocation>
    <subcellularLocation>
        <location evidence="1">Host endoplasmic reticulum-Golgi intermediate compartment</location>
    </subcellularLocation>
</comment>
<comment type="PTM">
    <text evidence="1">Phosphorylated in vivo. Autophosphorylated in vitro.</text>
</comment>
<comment type="similarity">
    <text evidence="2">Belongs to the protein kinase superfamily. Ser/Thr protein kinase family.</text>
</comment>
<reference key="1">
    <citation type="submission" date="1998-09" db="EMBL/GenBank/DDBJ databases">
        <title>Complete genomic sequence of vaccinia virus (Tian Tan strain).</title>
        <authorList>
            <person name="Jin Q."/>
            <person name="Hou Y.D."/>
            <person name="Cheng N.H."/>
            <person name="Yao E.M."/>
            <person name="Cheng S.X."/>
            <person name="Yang X.K."/>
            <person name="Jing D.Y."/>
            <person name="Yu W.H."/>
            <person name="Yuan J.S."/>
            <person name="Ma X.J."/>
        </authorList>
    </citation>
    <scope>NUCLEOTIDE SEQUENCE [LARGE SCALE GENOMIC DNA]</scope>
</reference>
<feature type="chain" id="PRO_0000086798" description="Serine/threonine-protein kinase 2">
    <location>
        <begin position="1"/>
        <end position="439"/>
    </location>
</feature>
<feature type="domain" description="Protein kinase" evidence="2">
    <location>
        <begin position="87"/>
        <end position="439"/>
    </location>
</feature>
<feature type="active site" description="Proton acceptor" evidence="2 3">
    <location>
        <position position="307"/>
    </location>
</feature>
<feature type="binding site" evidence="2">
    <location>
        <begin position="93"/>
        <end position="101"/>
    </location>
    <ligand>
        <name>ATP</name>
        <dbReference type="ChEBI" id="CHEBI:30616"/>
    </ligand>
</feature>
<feature type="binding site" evidence="2">
    <location>
        <position position="117"/>
    </location>
    <ligand>
        <name>ATP</name>
        <dbReference type="ChEBI" id="CHEBI:30616"/>
    </ligand>
</feature>
<name>VPK2_VACCT</name>